<reference key="1">
    <citation type="journal article" date="2006" name="BMC Genomics">
        <title>Complete genome sequence of Shigella flexneri 5b and comparison with Shigella flexneri 2a.</title>
        <authorList>
            <person name="Nie H."/>
            <person name="Yang F."/>
            <person name="Zhang X."/>
            <person name="Yang J."/>
            <person name="Chen L."/>
            <person name="Wang J."/>
            <person name="Xiong Z."/>
            <person name="Peng J."/>
            <person name="Sun L."/>
            <person name="Dong J."/>
            <person name="Xue Y."/>
            <person name="Xu X."/>
            <person name="Chen S."/>
            <person name="Yao Z."/>
            <person name="Shen Y."/>
            <person name="Jin Q."/>
        </authorList>
    </citation>
    <scope>NUCLEOTIDE SEQUENCE [LARGE SCALE GENOMIC DNA]</scope>
    <source>
        <strain>8401</strain>
    </source>
</reference>
<dbReference type="EMBL" id="CP000266">
    <property type="protein sequence ID" value="ABF02618.1"/>
    <property type="molecule type" value="Genomic_DNA"/>
</dbReference>
<dbReference type="RefSeq" id="WP_000792969.1">
    <property type="nucleotide sequence ID" value="NC_008258.1"/>
</dbReference>
<dbReference type="SMR" id="Q0T7K8"/>
<dbReference type="KEGG" id="sfv:SFV_0345"/>
<dbReference type="HOGENOM" id="CLU_169517_0_0_6"/>
<dbReference type="Proteomes" id="UP000000659">
    <property type="component" value="Chromosome"/>
</dbReference>
<dbReference type="GO" id="GO:0005737">
    <property type="term" value="C:cytoplasm"/>
    <property type="evidence" value="ECO:0007669"/>
    <property type="project" value="UniProtKB-SubCell"/>
</dbReference>
<dbReference type="GO" id="GO:0009267">
    <property type="term" value="P:cellular response to starvation"/>
    <property type="evidence" value="ECO:0007669"/>
    <property type="project" value="UniProtKB-UniRule"/>
</dbReference>
<dbReference type="HAMAP" id="MF_01198">
    <property type="entry name" value="Anti_adapt_IraP"/>
    <property type="match status" value="1"/>
</dbReference>
<dbReference type="InterPro" id="IPR019732">
    <property type="entry name" value="SigmaS_Anti-adapt_IraP"/>
</dbReference>
<dbReference type="NCBIfam" id="NF007598">
    <property type="entry name" value="PRK10244.1"/>
    <property type="match status" value="1"/>
</dbReference>
<dbReference type="Pfam" id="PF10796">
    <property type="entry name" value="Anti-adapt_IraP"/>
    <property type="match status" value="1"/>
</dbReference>
<feature type="chain" id="PRO_0000337867" description="Anti-adapter protein IraP">
    <location>
        <begin position="1"/>
        <end position="86"/>
    </location>
</feature>
<feature type="coiled-coil region" evidence="1">
    <location>
        <begin position="1"/>
        <end position="36"/>
    </location>
</feature>
<keyword id="KW-0175">Coiled coil</keyword>
<keyword id="KW-0963">Cytoplasm</keyword>
<keyword id="KW-0346">Stress response</keyword>
<gene>
    <name evidence="1" type="primary">iraP</name>
    <name type="ordered locus">SFV_0345</name>
</gene>
<sequence length="86" mass="9884">MKNLIAELLFKLAQKEEESKELCAQVEALEIIVTAMLRNMAQNDQQRLIDQVEGALYEVKPDASIPDDDTELLRDYVKKLLKHPCQ</sequence>
<comment type="function">
    <text evidence="1">Inhibits RpoS proteolysis by regulating RssB activity, thereby increasing the stability of the sigma stress factor RpoS especially during phosphate starvation, but also in stationary phase and during nitrogen starvation. Its effect on RpoS stability is due to its interaction with RssB, which probably blocks the interaction of RssB with RpoS, and the consequent delivery of the RssB-RpoS complex to the ClpXP protein degradation pathway.</text>
</comment>
<comment type="subunit">
    <text evidence="1">Interacts with RssB.</text>
</comment>
<comment type="subcellular location">
    <subcellularLocation>
        <location evidence="1">Cytoplasm</location>
    </subcellularLocation>
</comment>
<comment type="similarity">
    <text evidence="1">Belongs to the IraP family.</text>
</comment>
<name>IRAP_SHIF8</name>
<evidence type="ECO:0000255" key="1">
    <source>
        <dbReference type="HAMAP-Rule" id="MF_01198"/>
    </source>
</evidence>
<organism>
    <name type="scientific">Shigella flexneri serotype 5b (strain 8401)</name>
    <dbReference type="NCBI Taxonomy" id="373384"/>
    <lineage>
        <taxon>Bacteria</taxon>
        <taxon>Pseudomonadati</taxon>
        <taxon>Pseudomonadota</taxon>
        <taxon>Gammaproteobacteria</taxon>
        <taxon>Enterobacterales</taxon>
        <taxon>Enterobacteriaceae</taxon>
        <taxon>Shigella</taxon>
    </lineage>
</organism>
<proteinExistence type="inferred from homology"/>
<protein>
    <recommendedName>
        <fullName evidence="1">Anti-adapter protein IraP</fullName>
    </recommendedName>
</protein>
<accession>Q0T7K8</accession>